<proteinExistence type="inferred from homology"/>
<name>Y052_THEAC</name>
<gene>
    <name type="ordered locus">Ta0052</name>
</gene>
<feature type="chain" id="PRO_0000121567" description="DNA-binding protein Ta0052">
    <location>
        <begin position="1"/>
        <end position="115"/>
    </location>
</feature>
<feature type="region of interest" description="Disordered" evidence="2">
    <location>
        <begin position="1"/>
        <end position="41"/>
    </location>
</feature>
<feature type="compositionally biased region" description="Low complexity" evidence="2">
    <location>
        <begin position="15"/>
        <end position="25"/>
    </location>
</feature>
<feature type="compositionally biased region" description="Basic and acidic residues" evidence="2">
    <location>
        <begin position="26"/>
        <end position="41"/>
    </location>
</feature>
<organism>
    <name type="scientific">Thermoplasma acidophilum (strain ATCC 25905 / DSM 1728 / JCM 9062 / NBRC 15155 / AMRC-C165)</name>
    <dbReference type="NCBI Taxonomy" id="273075"/>
    <lineage>
        <taxon>Archaea</taxon>
        <taxon>Methanobacteriati</taxon>
        <taxon>Thermoplasmatota</taxon>
        <taxon>Thermoplasmata</taxon>
        <taxon>Thermoplasmatales</taxon>
        <taxon>Thermoplasmataceae</taxon>
        <taxon>Thermoplasma</taxon>
    </lineage>
</organism>
<evidence type="ECO:0000255" key="1">
    <source>
        <dbReference type="HAMAP-Rule" id="MF_00026"/>
    </source>
</evidence>
<evidence type="ECO:0000256" key="2">
    <source>
        <dbReference type="SAM" id="MobiDB-lite"/>
    </source>
</evidence>
<evidence type="ECO:0000305" key="3"/>
<keyword id="KW-0238">DNA-binding</keyword>
<keyword id="KW-1185">Reference proteome</keyword>
<protein>
    <recommendedName>
        <fullName evidence="1">DNA-binding protein Ta0052</fullName>
    </recommendedName>
</protein>
<sequence>MDDDEELERIRRQQLESMQRQAMQEQMREEQEKQREAERARRQQILRQILDPSARERLNNVRLVRPDLADNVENQLIQLASMGRINRMLSERDIIDILSKLTENKREPKIERRSK</sequence>
<comment type="similarity">
    <text evidence="1">Belongs to the PDCD5 family.</text>
</comment>
<comment type="sequence caution" evidence="3">
    <conflict type="erroneous initiation">
        <sequence resource="EMBL-CDS" id="CAC11200"/>
    </conflict>
</comment>
<reference key="1">
    <citation type="journal article" date="2000" name="Nature">
        <title>The genome sequence of the thermoacidophilic scavenger Thermoplasma acidophilum.</title>
        <authorList>
            <person name="Ruepp A."/>
            <person name="Graml W."/>
            <person name="Santos-Martinez M.-L."/>
            <person name="Koretke K.K."/>
            <person name="Volker C."/>
            <person name="Mewes H.-W."/>
            <person name="Frishman D."/>
            <person name="Stocker S."/>
            <person name="Lupas A.N."/>
            <person name="Baumeister W."/>
        </authorList>
    </citation>
    <scope>NUCLEOTIDE SEQUENCE [LARGE SCALE GENOMIC DNA]</scope>
    <source>
        <strain>ATCC 25905 / DSM 1728 / JCM 9062 / NBRC 15155 / AMRC-C165</strain>
    </source>
</reference>
<accession>Q9HM19</accession>
<dbReference type="EMBL" id="AL445063">
    <property type="protein sequence ID" value="CAC11200.1"/>
    <property type="status" value="ALT_INIT"/>
    <property type="molecule type" value="Genomic_DNA"/>
</dbReference>
<dbReference type="RefSeq" id="WP_048161406.1">
    <property type="nucleotide sequence ID" value="NC_002578.1"/>
</dbReference>
<dbReference type="SMR" id="Q9HM19"/>
<dbReference type="FunCoup" id="Q9HM19">
    <property type="interactions" value="87"/>
</dbReference>
<dbReference type="STRING" id="273075.gene:9571267"/>
<dbReference type="PaxDb" id="273075-Ta0052"/>
<dbReference type="EnsemblBacteria" id="CAC11200">
    <property type="protein sequence ID" value="CAC11200"/>
    <property type="gene ID" value="CAC11200"/>
</dbReference>
<dbReference type="KEGG" id="tac:Ta0052"/>
<dbReference type="eggNOG" id="arCOG04179">
    <property type="taxonomic scope" value="Archaea"/>
</dbReference>
<dbReference type="HOGENOM" id="CLU_122978_3_0_2"/>
<dbReference type="InParanoid" id="Q9HM19"/>
<dbReference type="OrthoDB" id="7912at2157"/>
<dbReference type="Proteomes" id="UP000001024">
    <property type="component" value="Chromosome"/>
</dbReference>
<dbReference type="GO" id="GO:0005829">
    <property type="term" value="C:cytosol"/>
    <property type="evidence" value="ECO:0007669"/>
    <property type="project" value="TreeGrafter"/>
</dbReference>
<dbReference type="GO" id="GO:0003677">
    <property type="term" value="F:DNA binding"/>
    <property type="evidence" value="ECO:0007669"/>
    <property type="project" value="UniProtKB-UniRule"/>
</dbReference>
<dbReference type="Gene3D" id="1.10.8.140">
    <property type="entry name" value="PDCD5-like"/>
    <property type="match status" value="1"/>
</dbReference>
<dbReference type="HAMAP" id="MF_00026">
    <property type="entry name" value="dsDNA_bind"/>
    <property type="match status" value="1"/>
</dbReference>
<dbReference type="InterPro" id="IPR022889">
    <property type="entry name" value="DNA_bind_arc"/>
</dbReference>
<dbReference type="InterPro" id="IPR002836">
    <property type="entry name" value="PDCD5-like"/>
</dbReference>
<dbReference type="InterPro" id="IPR036883">
    <property type="entry name" value="PDCD5-like_sf"/>
</dbReference>
<dbReference type="NCBIfam" id="NF003268">
    <property type="entry name" value="PRK04239.1"/>
    <property type="match status" value="1"/>
</dbReference>
<dbReference type="PANTHER" id="PTHR10840">
    <property type="entry name" value="PROGRAMMED CELL DEATH PROTEIN 5"/>
    <property type="match status" value="1"/>
</dbReference>
<dbReference type="PANTHER" id="PTHR10840:SF0">
    <property type="entry name" value="PROGRAMMED CELL DEATH PROTEIN 5"/>
    <property type="match status" value="1"/>
</dbReference>
<dbReference type="Pfam" id="PF01984">
    <property type="entry name" value="dsDNA_bind"/>
    <property type="match status" value="1"/>
</dbReference>
<dbReference type="PIRSF" id="PIRSF015730">
    <property type="entry name" value="TFAR19"/>
    <property type="match status" value="1"/>
</dbReference>
<dbReference type="SUPFAM" id="SSF46950">
    <property type="entry name" value="Double-stranded DNA-binding domain"/>
    <property type="match status" value="1"/>
</dbReference>